<evidence type="ECO:0000255" key="1">
    <source>
        <dbReference type="HAMAP-Rule" id="MF_00386"/>
    </source>
</evidence>
<comment type="function">
    <text evidence="1">Could be involved in insertion of integral membrane proteins into the membrane.</text>
</comment>
<comment type="subcellular location">
    <subcellularLocation>
        <location evidence="1">Cell inner membrane</location>
        <topology evidence="1">Peripheral membrane protein</topology>
        <orientation evidence="1">Cytoplasmic side</orientation>
    </subcellularLocation>
</comment>
<comment type="similarity">
    <text evidence="1">Belongs to the UPF0161 family.</text>
</comment>
<gene>
    <name type="ordered locus">Sama_0010</name>
</gene>
<reference key="1">
    <citation type="submission" date="2006-12" db="EMBL/GenBank/DDBJ databases">
        <title>Complete sequence of Shewanella amazonensis SB2B.</title>
        <authorList>
            <consortium name="US DOE Joint Genome Institute"/>
            <person name="Copeland A."/>
            <person name="Lucas S."/>
            <person name="Lapidus A."/>
            <person name="Barry K."/>
            <person name="Detter J.C."/>
            <person name="Glavina del Rio T."/>
            <person name="Hammon N."/>
            <person name="Israni S."/>
            <person name="Dalin E."/>
            <person name="Tice H."/>
            <person name="Pitluck S."/>
            <person name="Munk A.C."/>
            <person name="Brettin T."/>
            <person name="Bruce D."/>
            <person name="Han C."/>
            <person name="Tapia R."/>
            <person name="Gilna P."/>
            <person name="Schmutz J."/>
            <person name="Larimer F."/>
            <person name="Land M."/>
            <person name="Hauser L."/>
            <person name="Kyrpides N."/>
            <person name="Mikhailova N."/>
            <person name="Fredrickson J."/>
            <person name="Richardson P."/>
        </authorList>
    </citation>
    <scope>NUCLEOTIDE SEQUENCE [LARGE SCALE GENOMIC DNA]</scope>
    <source>
        <strain>ATCC BAA-1098 / SB2B</strain>
    </source>
</reference>
<organism>
    <name type="scientific">Shewanella amazonensis (strain ATCC BAA-1098 / SB2B)</name>
    <dbReference type="NCBI Taxonomy" id="326297"/>
    <lineage>
        <taxon>Bacteria</taxon>
        <taxon>Pseudomonadati</taxon>
        <taxon>Pseudomonadota</taxon>
        <taxon>Gammaproteobacteria</taxon>
        <taxon>Alteromonadales</taxon>
        <taxon>Shewanellaceae</taxon>
        <taxon>Shewanella</taxon>
    </lineage>
</organism>
<feature type="chain" id="PRO_1000013122" description="Putative membrane protein insertion efficiency factor">
    <location>
        <begin position="1"/>
        <end position="84"/>
    </location>
</feature>
<proteinExistence type="inferred from homology"/>
<dbReference type="EMBL" id="CP000507">
    <property type="protein sequence ID" value="ABL98222.1"/>
    <property type="molecule type" value="Genomic_DNA"/>
</dbReference>
<dbReference type="STRING" id="326297.Sama_0010"/>
<dbReference type="KEGG" id="saz:Sama_0010"/>
<dbReference type="eggNOG" id="COG0759">
    <property type="taxonomic scope" value="Bacteria"/>
</dbReference>
<dbReference type="HOGENOM" id="CLU_144811_5_2_6"/>
<dbReference type="OrthoDB" id="9801753at2"/>
<dbReference type="Proteomes" id="UP000009175">
    <property type="component" value="Chromosome"/>
</dbReference>
<dbReference type="GO" id="GO:0005886">
    <property type="term" value="C:plasma membrane"/>
    <property type="evidence" value="ECO:0007669"/>
    <property type="project" value="UniProtKB-SubCell"/>
</dbReference>
<dbReference type="HAMAP" id="MF_00386">
    <property type="entry name" value="UPF0161_YidD"/>
    <property type="match status" value="1"/>
</dbReference>
<dbReference type="InterPro" id="IPR002696">
    <property type="entry name" value="Membr_insert_effic_factor_YidD"/>
</dbReference>
<dbReference type="NCBIfam" id="TIGR00278">
    <property type="entry name" value="membrane protein insertion efficiency factor YidD"/>
    <property type="match status" value="1"/>
</dbReference>
<dbReference type="PANTHER" id="PTHR33383">
    <property type="entry name" value="MEMBRANE PROTEIN INSERTION EFFICIENCY FACTOR-RELATED"/>
    <property type="match status" value="1"/>
</dbReference>
<dbReference type="PANTHER" id="PTHR33383:SF1">
    <property type="entry name" value="MEMBRANE PROTEIN INSERTION EFFICIENCY FACTOR-RELATED"/>
    <property type="match status" value="1"/>
</dbReference>
<dbReference type="Pfam" id="PF01809">
    <property type="entry name" value="YidD"/>
    <property type="match status" value="1"/>
</dbReference>
<dbReference type="SMART" id="SM01234">
    <property type="entry name" value="Haemolytic"/>
    <property type="match status" value="1"/>
</dbReference>
<protein>
    <recommendedName>
        <fullName evidence="1">Putative membrane protein insertion efficiency factor</fullName>
    </recommendedName>
</protein>
<accession>A1S1G6</accession>
<sequence length="84" mass="9481">MAQTQSPFQWLATKLIRGYQIFISPILGPKCRFQPTCSHYAIEAIQLHGVIKGSWFAAKRILKCHPLHPGGNDPVPPKKDRCNK</sequence>
<name>YIDD_SHEAM</name>
<keyword id="KW-0997">Cell inner membrane</keyword>
<keyword id="KW-1003">Cell membrane</keyword>
<keyword id="KW-0472">Membrane</keyword>
<keyword id="KW-1185">Reference proteome</keyword>